<keyword id="KW-0520">NAD</keyword>
<keyword id="KW-0560">Oxidoreductase</keyword>
<accession>P26719</accession>
<accession>B4P0U4</accession>
<protein>
    <recommendedName>
        <fullName>Alcohol dehydrogenase</fullName>
        <ecNumber>1.1.1.1</ecNumber>
    </recommendedName>
</protein>
<name>ADH_DROYA</name>
<organism>
    <name type="scientific">Drosophila yakuba</name>
    <name type="common">Fruit fly</name>
    <dbReference type="NCBI Taxonomy" id="7245"/>
    <lineage>
        <taxon>Eukaryota</taxon>
        <taxon>Metazoa</taxon>
        <taxon>Ecdysozoa</taxon>
        <taxon>Arthropoda</taxon>
        <taxon>Hexapoda</taxon>
        <taxon>Insecta</taxon>
        <taxon>Pterygota</taxon>
        <taxon>Neoptera</taxon>
        <taxon>Endopterygota</taxon>
        <taxon>Diptera</taxon>
        <taxon>Brachycera</taxon>
        <taxon>Muscomorpha</taxon>
        <taxon>Ephydroidea</taxon>
        <taxon>Drosophilidae</taxon>
        <taxon>Drosophila</taxon>
        <taxon>Sophophora</taxon>
    </lineage>
</organism>
<comment type="catalytic activity">
    <reaction evidence="2">
        <text>a primary alcohol + NAD(+) = an aldehyde + NADH + H(+)</text>
        <dbReference type="Rhea" id="RHEA:10736"/>
        <dbReference type="ChEBI" id="CHEBI:15378"/>
        <dbReference type="ChEBI" id="CHEBI:15734"/>
        <dbReference type="ChEBI" id="CHEBI:17478"/>
        <dbReference type="ChEBI" id="CHEBI:57540"/>
        <dbReference type="ChEBI" id="CHEBI:57945"/>
        <dbReference type="EC" id="1.1.1.1"/>
    </reaction>
</comment>
<comment type="catalytic activity">
    <reaction evidence="2">
        <text>a secondary alcohol + NAD(+) = a ketone + NADH + H(+)</text>
        <dbReference type="Rhea" id="RHEA:10740"/>
        <dbReference type="ChEBI" id="CHEBI:15378"/>
        <dbReference type="ChEBI" id="CHEBI:17087"/>
        <dbReference type="ChEBI" id="CHEBI:35681"/>
        <dbReference type="ChEBI" id="CHEBI:57540"/>
        <dbReference type="ChEBI" id="CHEBI:57945"/>
        <dbReference type="EC" id="1.1.1.1"/>
    </reaction>
</comment>
<comment type="subunit">
    <text>Homodimer.</text>
</comment>
<comment type="similarity">
    <text evidence="3">Belongs to the short-chain dehydrogenases/reductases (SDR) family.</text>
</comment>
<gene>
    <name type="primary">Adh</name>
    <name type="ORF">GE19037</name>
</gene>
<dbReference type="EC" id="1.1.1.1"/>
<dbReference type="EMBL" id="X57365">
    <property type="protein sequence ID" value="CAA40639.1"/>
    <property type="molecule type" value="Genomic_DNA"/>
</dbReference>
<dbReference type="EMBL" id="X57366">
    <property type="protein sequence ID" value="CAA40640.1"/>
    <property type="molecule type" value="Genomic_DNA"/>
</dbReference>
<dbReference type="EMBL" id="X57367">
    <property type="protein sequence ID" value="CAA40641.1"/>
    <property type="molecule type" value="Genomic_DNA"/>
</dbReference>
<dbReference type="EMBL" id="X57368">
    <property type="protein sequence ID" value="CAA40642.1"/>
    <property type="molecule type" value="Genomic_DNA"/>
</dbReference>
<dbReference type="EMBL" id="X57369">
    <property type="protein sequence ID" value="CAA40643.1"/>
    <property type="molecule type" value="Genomic_DNA"/>
</dbReference>
<dbReference type="EMBL" id="X57370">
    <property type="protein sequence ID" value="CAA40644.1"/>
    <property type="molecule type" value="Genomic_DNA"/>
</dbReference>
<dbReference type="EMBL" id="X57371">
    <property type="protein sequence ID" value="CAA40645.1"/>
    <property type="molecule type" value="Genomic_DNA"/>
</dbReference>
<dbReference type="EMBL" id="X57372">
    <property type="protein sequence ID" value="CAA40646.1"/>
    <property type="molecule type" value="Genomic_DNA"/>
</dbReference>
<dbReference type="EMBL" id="X57373">
    <property type="protein sequence ID" value="CAA40647.1"/>
    <property type="molecule type" value="Genomic_DNA"/>
</dbReference>
<dbReference type="EMBL" id="X57374">
    <property type="protein sequence ID" value="CAA40648.1"/>
    <property type="molecule type" value="Genomic_DNA"/>
</dbReference>
<dbReference type="EMBL" id="X57375">
    <property type="protein sequence ID" value="CAA40649.1"/>
    <property type="molecule type" value="Genomic_DNA"/>
</dbReference>
<dbReference type="EMBL" id="X57376">
    <property type="protein sequence ID" value="CAA40650.1"/>
    <property type="molecule type" value="Genomic_DNA"/>
</dbReference>
<dbReference type="EMBL" id="X54120">
    <property type="protein sequence ID" value="CAA38063.1"/>
    <property type="molecule type" value="Genomic_DNA"/>
</dbReference>
<dbReference type="EMBL" id="CM000157">
    <property type="protein sequence ID" value="EDW89018.1"/>
    <property type="molecule type" value="Genomic_DNA"/>
</dbReference>
<dbReference type="PIR" id="S18277">
    <property type="entry name" value="S18277"/>
</dbReference>
<dbReference type="PIR" id="S18278">
    <property type="entry name" value="S18278"/>
</dbReference>
<dbReference type="PIR" id="S18279">
    <property type="entry name" value="S18279"/>
</dbReference>
<dbReference type="PIR" id="S18280">
    <property type="entry name" value="S18280"/>
</dbReference>
<dbReference type="PIR" id="S18281">
    <property type="entry name" value="S18281"/>
</dbReference>
<dbReference type="PIR" id="S18282">
    <property type="entry name" value="S18282"/>
</dbReference>
<dbReference type="PIR" id="S18284">
    <property type="entry name" value="S18284"/>
</dbReference>
<dbReference type="PIR" id="S18287">
    <property type="entry name" value="S18287"/>
</dbReference>
<dbReference type="PIR" id="S20718">
    <property type="entry name" value="S20718"/>
</dbReference>
<dbReference type="SMR" id="P26719"/>
<dbReference type="EnsemblMetazoa" id="FBtr0265555">
    <property type="protein sequence ID" value="FBpp0264047"/>
    <property type="gene ID" value="FBgn0013162"/>
</dbReference>
<dbReference type="EnsemblMetazoa" id="XM_002089270.4">
    <property type="protein sequence ID" value="XP_002089306.1"/>
    <property type="gene ID" value="LOC6528253"/>
</dbReference>
<dbReference type="GeneID" id="6528253"/>
<dbReference type="KEGG" id="dya:Dyak_GE19037"/>
<dbReference type="eggNOG" id="KOG4169">
    <property type="taxonomic scope" value="Eukaryota"/>
</dbReference>
<dbReference type="HOGENOM" id="CLU_010194_2_16_1"/>
<dbReference type="OMA" id="WSKHWDS"/>
<dbReference type="OrthoDB" id="417891at2759"/>
<dbReference type="PhylomeDB" id="P26719"/>
<dbReference type="ChiTaRS" id="Adh">
    <property type="organism name" value="fly"/>
</dbReference>
<dbReference type="Proteomes" id="UP000002282">
    <property type="component" value="Chromosome 2L"/>
</dbReference>
<dbReference type="GO" id="GO:0005829">
    <property type="term" value="C:cytosol"/>
    <property type="evidence" value="ECO:0007669"/>
    <property type="project" value="EnsemblMetazoa"/>
</dbReference>
<dbReference type="GO" id="GO:0004022">
    <property type="term" value="F:alcohol dehydrogenase (NAD+) activity"/>
    <property type="evidence" value="ECO:0007669"/>
    <property type="project" value="UniProtKB-EC"/>
</dbReference>
<dbReference type="GO" id="GO:0004029">
    <property type="term" value="F:aldehyde dehydrogenase (NAD+) activity"/>
    <property type="evidence" value="ECO:0007669"/>
    <property type="project" value="EnsemblMetazoa"/>
</dbReference>
<dbReference type="GO" id="GO:0042803">
    <property type="term" value="F:protein homodimerization activity"/>
    <property type="evidence" value="ECO:0007669"/>
    <property type="project" value="EnsemblMetazoa"/>
</dbReference>
<dbReference type="GO" id="GO:0006117">
    <property type="term" value="P:acetaldehyde metabolic process"/>
    <property type="evidence" value="ECO:0007669"/>
    <property type="project" value="EnsemblMetazoa"/>
</dbReference>
<dbReference type="GO" id="GO:0019431">
    <property type="term" value="P:acetyl-CoA biosynthetic process from ethanol"/>
    <property type="evidence" value="ECO:0007669"/>
    <property type="project" value="EnsemblMetazoa"/>
</dbReference>
<dbReference type="GO" id="GO:0046164">
    <property type="term" value="P:alcohol catabolic process"/>
    <property type="evidence" value="ECO:0007669"/>
    <property type="project" value="EnsemblMetazoa"/>
</dbReference>
<dbReference type="GO" id="GO:0048149">
    <property type="term" value="P:behavioral response to ethanol"/>
    <property type="evidence" value="ECO:0007669"/>
    <property type="project" value="EnsemblMetazoa"/>
</dbReference>
<dbReference type="GO" id="GO:0006734">
    <property type="term" value="P:NADH metabolic process"/>
    <property type="evidence" value="ECO:0007669"/>
    <property type="project" value="EnsemblMetazoa"/>
</dbReference>
<dbReference type="CDD" id="cd05323">
    <property type="entry name" value="ADH_SDR_c_like"/>
    <property type="match status" value="1"/>
</dbReference>
<dbReference type="FunFam" id="3.40.50.720:FF:000302">
    <property type="entry name" value="Alcohol dehydrogenase"/>
    <property type="match status" value="1"/>
</dbReference>
<dbReference type="Gene3D" id="3.40.50.720">
    <property type="entry name" value="NAD(P)-binding Rossmann-like Domain"/>
    <property type="match status" value="1"/>
</dbReference>
<dbReference type="InterPro" id="IPR002425">
    <property type="entry name" value="ADH_Drosophila-type"/>
</dbReference>
<dbReference type="InterPro" id="IPR036291">
    <property type="entry name" value="NAD(P)-bd_dom_sf"/>
</dbReference>
<dbReference type="InterPro" id="IPR020904">
    <property type="entry name" value="Sc_DH/Rdtase_CS"/>
</dbReference>
<dbReference type="InterPro" id="IPR002347">
    <property type="entry name" value="SDR_fam"/>
</dbReference>
<dbReference type="PANTHER" id="PTHR42901">
    <property type="entry name" value="ALCOHOL DEHYDROGENASE"/>
    <property type="match status" value="1"/>
</dbReference>
<dbReference type="PANTHER" id="PTHR42901:SF1">
    <property type="entry name" value="ALCOHOL DEHYDROGENASE"/>
    <property type="match status" value="1"/>
</dbReference>
<dbReference type="Pfam" id="PF00106">
    <property type="entry name" value="adh_short"/>
    <property type="match status" value="1"/>
</dbReference>
<dbReference type="PRINTS" id="PR01168">
    <property type="entry name" value="ALCDHDRGNASE"/>
</dbReference>
<dbReference type="PRINTS" id="PR01167">
    <property type="entry name" value="INSADHFAMILY"/>
</dbReference>
<dbReference type="PRINTS" id="PR00080">
    <property type="entry name" value="SDRFAMILY"/>
</dbReference>
<dbReference type="SUPFAM" id="SSF51735">
    <property type="entry name" value="NAD(P)-binding Rossmann-fold domains"/>
    <property type="match status" value="1"/>
</dbReference>
<dbReference type="PROSITE" id="PS00061">
    <property type="entry name" value="ADH_SHORT"/>
    <property type="match status" value="1"/>
</dbReference>
<evidence type="ECO:0000250" key="1"/>
<evidence type="ECO:0000255" key="2">
    <source>
        <dbReference type="PROSITE-ProRule" id="PRU10001"/>
    </source>
</evidence>
<evidence type="ECO:0000305" key="3"/>
<proteinExistence type="inferred from homology"/>
<reference key="1">
    <citation type="journal article" date="1991" name="Nature">
        <title>Adaptive protein evolution at the Adh locus in Drosophila.</title>
        <authorList>
            <person name="McDonald J.H."/>
            <person name="Kreitman M."/>
        </authorList>
    </citation>
    <scope>NUCLEOTIDE SEQUENCE [GENOMIC DNA]</scope>
    <source>
        <strain>Brazzaville</strain>
    </source>
</reference>
<reference key="2">
    <citation type="submission" date="1990-07" db="EMBL/GenBank/DDBJ databases">
        <authorList>
            <person name="Ashburner M."/>
        </authorList>
    </citation>
    <scope>NUCLEOTIDE SEQUENCE [GENOMIC DNA]</scope>
    <source>
        <strain>Gif-sur-Yvette stock 115</strain>
    </source>
</reference>
<reference key="3">
    <citation type="journal article" date="2007" name="Nature">
        <title>Evolution of genes and genomes on the Drosophila phylogeny.</title>
        <authorList>
            <consortium name="Drosophila 12 genomes consortium"/>
        </authorList>
    </citation>
    <scope>NUCLEOTIDE SEQUENCE [LARGE SCALE GENOMIC DNA]</scope>
    <source>
        <strain>Tai18E2 / Tucson 14021-0261.01</strain>
    </source>
</reference>
<feature type="initiator methionine" description="Removed" evidence="1">
    <location>
        <position position="1"/>
    </location>
</feature>
<feature type="chain" id="PRO_0000054501" description="Alcohol dehydrogenase">
    <location>
        <begin position="2"/>
        <end position="256"/>
    </location>
</feature>
<feature type="active site" description="Proton acceptor" evidence="2">
    <location>
        <position position="153"/>
    </location>
</feature>
<feature type="binding site" evidence="1">
    <location>
        <begin position="12"/>
        <end position="35"/>
    </location>
    <ligand>
        <name>NAD(+)</name>
        <dbReference type="ChEBI" id="CHEBI:57540"/>
    </ligand>
</feature>
<feature type="binding site" evidence="1">
    <location>
        <position position="140"/>
    </location>
    <ligand>
        <name>substrate</name>
    </ligand>
</feature>
<feature type="sequence variant" description="In strain: Gif-sur-Yvette stock 115.">
    <original>H</original>
    <variation>Q</variation>
    <location>
        <position position="211"/>
    </location>
</feature>
<feature type="sequence variant" description="In strain: Gif-sur-Yvette stock 115.">
    <original>T</original>
    <variation>N</variation>
    <location>
        <position position="213"/>
    </location>
</feature>
<feature type="sequence variant" description="In strain: Gif-sur-Yvette stock 115.">
    <original>G</original>
    <variation>R</variation>
    <location>
        <position position="233"/>
    </location>
</feature>
<sequence length="256" mass="27716">MAFTLTNKNVVFVAGLGGIGLDTSKELVKRDLKNLVILDRIENPAAIAELKAINPKVTVTFYPYDVTVPIAETTKLLKTIFAQLKTIDVLINGAGILDDHQIERTIAVNYTGLVNTTTAILDFWDKRKGGPGGIICNIGSVTGFNAIYQVPVYSGTKAAVVNFTSSLAKLAPITGVTAYTVNPGITRTTLVHKFNSWLDVEPQVAEKLLAHPTQPSLACAQNFVKAIELNQNGAIWKLDLGTLEAIQWSKHWDSGI</sequence>